<dbReference type="EC" id="2.4.1.325" evidence="1"/>
<dbReference type="EMBL" id="CP000886">
    <property type="protein sequence ID" value="ABX70176.1"/>
    <property type="molecule type" value="Genomic_DNA"/>
</dbReference>
<dbReference type="RefSeq" id="WP_000217188.1">
    <property type="nucleotide sequence ID" value="NC_010102.1"/>
</dbReference>
<dbReference type="CAZy" id="GT56">
    <property type="family name" value="Glycosyltransferase Family 56"/>
</dbReference>
<dbReference type="KEGG" id="spq:SPAB_04872"/>
<dbReference type="PATRIC" id="fig|1016998.12.peg.4580"/>
<dbReference type="HOGENOM" id="CLU_066584_0_0_6"/>
<dbReference type="BioCyc" id="SENT1016998:SPAB_RS19815-MONOMER"/>
<dbReference type="UniPathway" id="UPA00566"/>
<dbReference type="Proteomes" id="UP000008556">
    <property type="component" value="Chromosome"/>
</dbReference>
<dbReference type="GO" id="GO:0005886">
    <property type="term" value="C:plasma membrane"/>
    <property type="evidence" value="ECO:0007669"/>
    <property type="project" value="UniProtKB-SubCell"/>
</dbReference>
<dbReference type="GO" id="GO:0102031">
    <property type="term" value="F:4-acetamido-4,6-dideoxy-D-galactose transferase activity"/>
    <property type="evidence" value="ECO:0007669"/>
    <property type="project" value="UniProtKB-EC"/>
</dbReference>
<dbReference type="GO" id="GO:0008417">
    <property type="term" value="F:fucosyltransferase activity"/>
    <property type="evidence" value="ECO:0007669"/>
    <property type="project" value="InterPro"/>
</dbReference>
<dbReference type="GO" id="GO:0009246">
    <property type="term" value="P:enterobacterial common antigen biosynthetic process"/>
    <property type="evidence" value="ECO:0007669"/>
    <property type="project" value="UniProtKB-UniRule"/>
</dbReference>
<dbReference type="GO" id="GO:0036065">
    <property type="term" value="P:fucosylation"/>
    <property type="evidence" value="ECO:0007669"/>
    <property type="project" value="InterPro"/>
</dbReference>
<dbReference type="HAMAP" id="MF_01002">
    <property type="entry name" value="WecF_RffT"/>
    <property type="match status" value="1"/>
</dbReference>
<dbReference type="InterPro" id="IPR009993">
    <property type="entry name" value="WecF"/>
</dbReference>
<dbReference type="NCBIfam" id="NF002753">
    <property type="entry name" value="PRK02797.1-2"/>
    <property type="match status" value="1"/>
</dbReference>
<dbReference type="NCBIfam" id="NF002754">
    <property type="entry name" value="PRK02797.1-3"/>
    <property type="match status" value="1"/>
</dbReference>
<dbReference type="Pfam" id="PF07429">
    <property type="entry name" value="Glyco_transf_56"/>
    <property type="match status" value="1"/>
</dbReference>
<reference key="1">
    <citation type="submission" date="2007-11" db="EMBL/GenBank/DDBJ databases">
        <authorList>
            <consortium name="The Salmonella enterica serovar Paratyphi B Genome Sequencing Project"/>
            <person name="McClelland M."/>
            <person name="Sanderson E.K."/>
            <person name="Porwollik S."/>
            <person name="Spieth J."/>
            <person name="Clifton W.S."/>
            <person name="Fulton R."/>
            <person name="Cordes M."/>
            <person name="Wollam A."/>
            <person name="Shah N."/>
            <person name="Pepin K."/>
            <person name="Bhonagiri V."/>
            <person name="Nash W."/>
            <person name="Johnson M."/>
            <person name="Thiruvilangam P."/>
            <person name="Wilson R."/>
        </authorList>
    </citation>
    <scope>NUCLEOTIDE SEQUENCE [LARGE SCALE GENOMIC DNA]</scope>
    <source>
        <strain>ATCC BAA-1250 / SPB7</strain>
    </source>
</reference>
<evidence type="ECO:0000255" key="1">
    <source>
        <dbReference type="HAMAP-Rule" id="MF_01002"/>
    </source>
</evidence>
<organism>
    <name type="scientific">Salmonella paratyphi B (strain ATCC BAA-1250 / SPB7)</name>
    <dbReference type="NCBI Taxonomy" id="1016998"/>
    <lineage>
        <taxon>Bacteria</taxon>
        <taxon>Pseudomonadati</taxon>
        <taxon>Pseudomonadota</taxon>
        <taxon>Gammaproteobacteria</taxon>
        <taxon>Enterobacterales</taxon>
        <taxon>Enterobacteriaceae</taxon>
        <taxon>Salmonella</taxon>
    </lineage>
</organism>
<sequence>MTVLIHVLGSDIPHHNHTVLRFFNDTLAATSEHAREFMVAGEDNGFTESCPALSLRFYGSKKALAQAVIAKAKANRRQRFFFHGQFNTSLWLALLSGGIKPAQFYWHIWGADLYEVSHGLKFRLFYPLRRIAQGRVGGVFATRGDLSYFARQHPGVRGELLYFPTRMDPSLNAMAKERQRAGKLTILVGNSGDRSNQHIAALRAVYQQFGDTVNVVVPMGYPANNQAYIDEVRQAGLALFSAENLQILSEKMEFDTYLALLRQCDLGYFIFARQQGIGTLCLLIQADIPCVLNRDNPFWQDMAEQHLPVLFTTDDLNEQVVREAQRQLASVDKSGITFFSPNYLQPWHNALRIAAGEAE</sequence>
<accession>A9MXG5</accession>
<name>WECF_SALPB</name>
<comment type="function">
    <text evidence="1">Catalyzes the synthesis of Und-PP-GlcNAc-ManNAcA-Fuc4NAc (Lipid III), the third lipid-linked intermediate involved in ECA synthesis.</text>
</comment>
<comment type="catalytic activity">
    <reaction evidence="1">
        <text>beta-D-ManNAcA-(1-&gt;4)-alpha-D-GlcNAc-di-trans,octa-cis-undecaprenyl diphosphate + dTDP-4-acetamido-4,6-dideoxy-alpha-D-galactose = alpha-D-FucNAc4-(1-&gt;4)-beta-D-ManNAcA-(1-&gt;4)-D-GlcNAc-undecaprenyl diphosphate + dTDP + H(+)</text>
        <dbReference type="Rhea" id="RHEA:28759"/>
        <dbReference type="ChEBI" id="CHEBI:15378"/>
        <dbReference type="ChEBI" id="CHEBI:58369"/>
        <dbReference type="ChEBI" id="CHEBI:61495"/>
        <dbReference type="ChEBI" id="CHEBI:61496"/>
        <dbReference type="ChEBI" id="CHEBI:68493"/>
        <dbReference type="EC" id="2.4.1.325"/>
    </reaction>
</comment>
<comment type="pathway">
    <text evidence="1">Bacterial outer membrane biogenesis; enterobacterial common antigen biosynthesis.</text>
</comment>
<comment type="subcellular location">
    <subcellularLocation>
        <location evidence="1">Cell inner membrane</location>
        <topology evidence="1">Peripheral membrane protein</topology>
    </subcellularLocation>
</comment>
<comment type="similarity">
    <text evidence="1">Belongs to the glycosyltransferase 56 family.</text>
</comment>
<gene>
    <name evidence="1" type="primary">wecF</name>
    <name evidence="1" type="synonym">rffT</name>
    <name type="ordered locus">SPAB_04872</name>
</gene>
<proteinExistence type="inferred from homology"/>
<protein>
    <recommendedName>
        <fullName evidence="1">TDP-N-acetylfucosamine:lipid II N-acetylfucosaminyltransferase</fullName>
        <ecNumber evidence="1">2.4.1.325</ecNumber>
    </recommendedName>
    <alternativeName>
        <fullName evidence="1">4-alpha-L-fucosyltransferase</fullName>
    </alternativeName>
    <alternativeName>
        <fullName evidence="1">TDP-Fuc4NAc:lipid II Fuc4NAc transferase</fullName>
        <shortName evidence="1">Fuc4NAc transferase</shortName>
    </alternativeName>
</protein>
<keyword id="KW-0997">Cell inner membrane</keyword>
<keyword id="KW-1003">Cell membrane</keyword>
<keyword id="KW-0328">Glycosyltransferase</keyword>
<keyword id="KW-0472">Membrane</keyword>
<keyword id="KW-0808">Transferase</keyword>
<feature type="chain" id="PRO_1000083951" description="TDP-N-acetylfucosamine:lipid II N-acetylfucosaminyltransferase">
    <location>
        <begin position="1"/>
        <end position="359"/>
    </location>
</feature>